<dbReference type="EC" id="6.3.2.4" evidence="2"/>
<dbReference type="EMBL" id="CP000828">
    <property type="protein sequence ID" value="ABW28120.1"/>
    <property type="molecule type" value="Genomic_DNA"/>
</dbReference>
<dbReference type="RefSeq" id="WP_012163548.1">
    <property type="nucleotide sequence ID" value="NC_009925.1"/>
</dbReference>
<dbReference type="SMR" id="B0CEL5"/>
<dbReference type="STRING" id="329726.AM1_3124"/>
<dbReference type="KEGG" id="amr:AM1_3124"/>
<dbReference type="eggNOG" id="COG1181">
    <property type="taxonomic scope" value="Bacteria"/>
</dbReference>
<dbReference type="HOGENOM" id="CLU_039268_0_0_3"/>
<dbReference type="OrthoDB" id="9813261at2"/>
<dbReference type="UniPathway" id="UPA00219"/>
<dbReference type="Proteomes" id="UP000000268">
    <property type="component" value="Chromosome"/>
</dbReference>
<dbReference type="GO" id="GO:0005829">
    <property type="term" value="C:cytosol"/>
    <property type="evidence" value="ECO:0007669"/>
    <property type="project" value="TreeGrafter"/>
</dbReference>
<dbReference type="GO" id="GO:0005524">
    <property type="term" value="F:ATP binding"/>
    <property type="evidence" value="ECO:0007669"/>
    <property type="project" value="UniProtKB-KW"/>
</dbReference>
<dbReference type="GO" id="GO:0008716">
    <property type="term" value="F:D-alanine-D-alanine ligase activity"/>
    <property type="evidence" value="ECO:0007669"/>
    <property type="project" value="UniProtKB-UniRule"/>
</dbReference>
<dbReference type="GO" id="GO:0046872">
    <property type="term" value="F:metal ion binding"/>
    <property type="evidence" value="ECO:0007669"/>
    <property type="project" value="UniProtKB-KW"/>
</dbReference>
<dbReference type="GO" id="GO:0071555">
    <property type="term" value="P:cell wall organization"/>
    <property type="evidence" value="ECO:0007669"/>
    <property type="project" value="UniProtKB-KW"/>
</dbReference>
<dbReference type="GO" id="GO:0009252">
    <property type="term" value="P:peptidoglycan biosynthetic process"/>
    <property type="evidence" value="ECO:0007669"/>
    <property type="project" value="UniProtKB-UniRule"/>
</dbReference>
<dbReference type="GO" id="GO:0008360">
    <property type="term" value="P:regulation of cell shape"/>
    <property type="evidence" value="ECO:0007669"/>
    <property type="project" value="UniProtKB-KW"/>
</dbReference>
<dbReference type="FunFam" id="3.30.1490.20:FF:000007">
    <property type="entry name" value="D-alanine--D-alanine ligase"/>
    <property type="match status" value="1"/>
</dbReference>
<dbReference type="FunFam" id="3.30.470.20:FF:000008">
    <property type="entry name" value="D-alanine--D-alanine ligase"/>
    <property type="match status" value="1"/>
</dbReference>
<dbReference type="Gene3D" id="3.40.50.20">
    <property type="match status" value="1"/>
</dbReference>
<dbReference type="Gene3D" id="3.30.1490.20">
    <property type="entry name" value="ATP-grasp fold, A domain"/>
    <property type="match status" value="1"/>
</dbReference>
<dbReference type="Gene3D" id="3.30.470.20">
    <property type="entry name" value="ATP-grasp fold, B domain"/>
    <property type="match status" value="1"/>
</dbReference>
<dbReference type="HAMAP" id="MF_00047">
    <property type="entry name" value="Dala_Dala_lig"/>
    <property type="match status" value="1"/>
</dbReference>
<dbReference type="InterPro" id="IPR011761">
    <property type="entry name" value="ATP-grasp"/>
</dbReference>
<dbReference type="InterPro" id="IPR013815">
    <property type="entry name" value="ATP_grasp_subdomain_1"/>
</dbReference>
<dbReference type="InterPro" id="IPR000291">
    <property type="entry name" value="D-Ala_lig_Van_CS"/>
</dbReference>
<dbReference type="InterPro" id="IPR005905">
    <property type="entry name" value="D_ala_D_ala"/>
</dbReference>
<dbReference type="InterPro" id="IPR011095">
    <property type="entry name" value="Dala_Dala_lig_C"/>
</dbReference>
<dbReference type="InterPro" id="IPR011127">
    <property type="entry name" value="Dala_Dala_lig_N"/>
</dbReference>
<dbReference type="InterPro" id="IPR016185">
    <property type="entry name" value="PreATP-grasp_dom_sf"/>
</dbReference>
<dbReference type="NCBIfam" id="TIGR01205">
    <property type="entry name" value="D_ala_D_alaTIGR"/>
    <property type="match status" value="1"/>
</dbReference>
<dbReference type="NCBIfam" id="NF002378">
    <property type="entry name" value="PRK01372.1"/>
    <property type="match status" value="1"/>
</dbReference>
<dbReference type="NCBIfam" id="NF002528">
    <property type="entry name" value="PRK01966.1-4"/>
    <property type="match status" value="1"/>
</dbReference>
<dbReference type="PANTHER" id="PTHR23132">
    <property type="entry name" value="D-ALANINE--D-ALANINE LIGASE"/>
    <property type="match status" value="1"/>
</dbReference>
<dbReference type="PANTHER" id="PTHR23132:SF25">
    <property type="entry name" value="D-ALANINE--D-ALANINE LIGASE A"/>
    <property type="match status" value="1"/>
</dbReference>
<dbReference type="Pfam" id="PF07478">
    <property type="entry name" value="Dala_Dala_lig_C"/>
    <property type="match status" value="1"/>
</dbReference>
<dbReference type="Pfam" id="PF01820">
    <property type="entry name" value="Dala_Dala_lig_N"/>
    <property type="match status" value="1"/>
</dbReference>
<dbReference type="PIRSF" id="PIRSF039102">
    <property type="entry name" value="Ddl/VanB"/>
    <property type="match status" value="1"/>
</dbReference>
<dbReference type="SUPFAM" id="SSF56059">
    <property type="entry name" value="Glutathione synthetase ATP-binding domain-like"/>
    <property type="match status" value="1"/>
</dbReference>
<dbReference type="SUPFAM" id="SSF52440">
    <property type="entry name" value="PreATP-grasp domain"/>
    <property type="match status" value="1"/>
</dbReference>
<dbReference type="PROSITE" id="PS50975">
    <property type="entry name" value="ATP_GRASP"/>
    <property type="match status" value="1"/>
</dbReference>
<dbReference type="PROSITE" id="PS00843">
    <property type="entry name" value="DALA_DALA_LIGASE_1"/>
    <property type="match status" value="1"/>
</dbReference>
<dbReference type="PROSITE" id="PS00844">
    <property type="entry name" value="DALA_DALA_LIGASE_2"/>
    <property type="match status" value="1"/>
</dbReference>
<reference key="1">
    <citation type="journal article" date="2008" name="Proc. Natl. Acad. Sci. U.S.A.">
        <title>Niche adaptation and genome expansion in the chlorophyll d-producing cyanobacterium Acaryochloris marina.</title>
        <authorList>
            <person name="Swingley W.D."/>
            <person name="Chen M."/>
            <person name="Cheung P.C."/>
            <person name="Conrad A.L."/>
            <person name="Dejesa L.C."/>
            <person name="Hao J."/>
            <person name="Honchak B.M."/>
            <person name="Karbach L.E."/>
            <person name="Kurdoglu A."/>
            <person name="Lahiri S."/>
            <person name="Mastrian S.D."/>
            <person name="Miyashita H."/>
            <person name="Page L."/>
            <person name="Ramakrishna P."/>
            <person name="Satoh S."/>
            <person name="Sattley W.M."/>
            <person name="Shimada Y."/>
            <person name="Taylor H.L."/>
            <person name="Tomo T."/>
            <person name="Tsuchiya T."/>
            <person name="Wang Z.T."/>
            <person name="Raymond J."/>
            <person name="Mimuro M."/>
            <person name="Blankenship R.E."/>
            <person name="Touchman J.W."/>
        </authorList>
    </citation>
    <scope>NUCLEOTIDE SEQUENCE [LARGE SCALE GENOMIC DNA]</scope>
    <source>
        <strain>MBIC 11017</strain>
    </source>
</reference>
<accession>B0CEL5</accession>
<evidence type="ECO:0000250" key="1"/>
<evidence type="ECO:0000255" key="2">
    <source>
        <dbReference type="HAMAP-Rule" id="MF_00047"/>
    </source>
</evidence>
<gene>
    <name evidence="2" type="primary">ddl</name>
    <name type="ordered locus">AM1_3124</name>
</gene>
<protein>
    <recommendedName>
        <fullName evidence="2">D-alanine--D-alanine ligase</fullName>
        <ecNumber evidence="2">6.3.2.4</ecNumber>
    </recommendedName>
    <alternativeName>
        <fullName evidence="2">D-Ala-D-Ala ligase</fullName>
    </alternativeName>
    <alternativeName>
        <fullName evidence="2">D-alanylalanine synthetase</fullName>
    </alternativeName>
</protein>
<name>DDL_ACAM1</name>
<organism>
    <name type="scientific">Acaryochloris marina (strain MBIC 11017)</name>
    <dbReference type="NCBI Taxonomy" id="329726"/>
    <lineage>
        <taxon>Bacteria</taxon>
        <taxon>Bacillati</taxon>
        <taxon>Cyanobacteriota</taxon>
        <taxon>Cyanophyceae</taxon>
        <taxon>Acaryochloridales</taxon>
        <taxon>Acaryochloridaceae</taxon>
        <taxon>Acaryochloris</taxon>
    </lineage>
</organism>
<feature type="chain" id="PRO_0000341042" description="D-alanine--D-alanine ligase">
    <location>
        <begin position="1"/>
        <end position="352"/>
    </location>
</feature>
<feature type="domain" description="ATP-grasp" evidence="2">
    <location>
        <begin position="133"/>
        <end position="342"/>
    </location>
</feature>
<feature type="binding site" evidence="2">
    <location>
        <begin position="169"/>
        <end position="224"/>
    </location>
    <ligand>
        <name>ATP</name>
        <dbReference type="ChEBI" id="CHEBI:30616"/>
    </ligand>
</feature>
<feature type="binding site" evidence="2">
    <location>
        <position position="295"/>
    </location>
    <ligand>
        <name>Mg(2+)</name>
        <dbReference type="ChEBI" id="CHEBI:18420"/>
        <label>1</label>
    </ligand>
</feature>
<feature type="binding site" evidence="2">
    <location>
        <position position="309"/>
    </location>
    <ligand>
        <name>Mg(2+)</name>
        <dbReference type="ChEBI" id="CHEBI:18420"/>
        <label>1</label>
    </ligand>
</feature>
<feature type="binding site" evidence="2">
    <location>
        <position position="309"/>
    </location>
    <ligand>
        <name>Mg(2+)</name>
        <dbReference type="ChEBI" id="CHEBI:18420"/>
        <label>2</label>
    </ligand>
</feature>
<feature type="binding site" evidence="2">
    <location>
        <position position="311"/>
    </location>
    <ligand>
        <name>Mg(2+)</name>
        <dbReference type="ChEBI" id="CHEBI:18420"/>
        <label>2</label>
    </ligand>
</feature>
<proteinExistence type="inferred from homology"/>
<keyword id="KW-0067">ATP-binding</keyword>
<keyword id="KW-0133">Cell shape</keyword>
<keyword id="KW-0961">Cell wall biogenesis/degradation</keyword>
<keyword id="KW-0963">Cytoplasm</keyword>
<keyword id="KW-0436">Ligase</keyword>
<keyword id="KW-0460">Magnesium</keyword>
<keyword id="KW-0464">Manganese</keyword>
<keyword id="KW-0479">Metal-binding</keyword>
<keyword id="KW-0547">Nucleotide-binding</keyword>
<keyword id="KW-0573">Peptidoglycan synthesis</keyword>
<keyword id="KW-1185">Reference proteome</keyword>
<sequence length="352" mass="38146">MEKLRVGLVFGGCSGEHEVSITSAKAVCGALQTAPNPDKYEVIPFYIHKNGCWQAGEVANQVLEMGKPQDQAEEGSRWHFPEAAASIDVWFPILHGPNGEDGTIQGLLQLMQVPYVGSGVLGSAAGMDKIAMKTVFAAAGLPQVKYESVTREQVWSDPCVFKQVCDRIDETIGYPNFVKPANLGSSVGISKVRSRLELEAALDSAASFDRRIVVEAGVVAREVECAVLGNGRPRASVVGEISFDSDFYDYETKYTEGRASLQIPAPLPADITEKIQEMAINAFIAVDAAGLSRVDFFYVESTGEVLINEINTLPGFTSTSMYPMLWSVSGVDFPKLVDRLIQLAVEYHAPAD</sequence>
<comment type="function">
    <text evidence="2">Cell wall formation.</text>
</comment>
<comment type="catalytic activity">
    <reaction evidence="2">
        <text>2 D-alanine + ATP = D-alanyl-D-alanine + ADP + phosphate + H(+)</text>
        <dbReference type="Rhea" id="RHEA:11224"/>
        <dbReference type="ChEBI" id="CHEBI:15378"/>
        <dbReference type="ChEBI" id="CHEBI:30616"/>
        <dbReference type="ChEBI" id="CHEBI:43474"/>
        <dbReference type="ChEBI" id="CHEBI:57416"/>
        <dbReference type="ChEBI" id="CHEBI:57822"/>
        <dbReference type="ChEBI" id="CHEBI:456216"/>
        <dbReference type="EC" id="6.3.2.4"/>
    </reaction>
</comment>
<comment type="cofactor">
    <cofactor evidence="1">
        <name>Mg(2+)</name>
        <dbReference type="ChEBI" id="CHEBI:18420"/>
    </cofactor>
    <cofactor evidence="1">
        <name>Mn(2+)</name>
        <dbReference type="ChEBI" id="CHEBI:29035"/>
    </cofactor>
    <text evidence="1">Binds 2 magnesium or manganese ions per subunit.</text>
</comment>
<comment type="pathway">
    <text evidence="2">Cell wall biogenesis; peptidoglycan biosynthesis.</text>
</comment>
<comment type="subcellular location">
    <subcellularLocation>
        <location evidence="2">Cytoplasm</location>
    </subcellularLocation>
</comment>
<comment type="similarity">
    <text evidence="2">Belongs to the D-alanine--D-alanine ligase family.</text>
</comment>